<reference key="1">
    <citation type="submission" date="2005-09" db="EMBL/GenBank/DDBJ databases">
        <title>Complete genome sequence of Clostridium kluyveri and comparative genomics of Clostridia species.</title>
        <authorList>
            <person name="Inui M."/>
            <person name="Nonaka H."/>
            <person name="Shinoda Y."/>
            <person name="Ikenaga Y."/>
            <person name="Abe M."/>
            <person name="Naito K."/>
            <person name="Vertes A.A."/>
            <person name="Yukawa H."/>
        </authorList>
    </citation>
    <scope>NUCLEOTIDE SEQUENCE [LARGE SCALE GENOMIC DNA]</scope>
    <source>
        <strain>NBRC 12016</strain>
    </source>
</reference>
<proteinExistence type="inferred from homology"/>
<sequence length="130" mass="14650">MAKVQYFGTGRRKKSIARVRLVPGEGKITINKRSIEEYFGLETLRVIVNQPLVLTSTNGKFDVLVNVHGGGFTGQAGAIRHGISRALLKADENLRLELKKAGFLTRDPRMKERKKYGLKKARRAPQFSKR</sequence>
<organism>
    <name type="scientific">Clostridium kluyveri (strain NBRC 12016)</name>
    <dbReference type="NCBI Taxonomy" id="583346"/>
    <lineage>
        <taxon>Bacteria</taxon>
        <taxon>Bacillati</taxon>
        <taxon>Bacillota</taxon>
        <taxon>Clostridia</taxon>
        <taxon>Eubacteriales</taxon>
        <taxon>Clostridiaceae</taxon>
        <taxon>Clostridium</taxon>
    </lineage>
</organism>
<dbReference type="EMBL" id="AP009049">
    <property type="protein sequence ID" value="BAH05269.1"/>
    <property type="molecule type" value="Genomic_DNA"/>
</dbReference>
<dbReference type="RefSeq" id="WP_011988838.1">
    <property type="nucleotide sequence ID" value="NC_011837.1"/>
</dbReference>
<dbReference type="SMR" id="B9DYE4"/>
<dbReference type="KEGG" id="ckr:CKR_0218"/>
<dbReference type="HOGENOM" id="CLU_046483_2_1_9"/>
<dbReference type="Proteomes" id="UP000007969">
    <property type="component" value="Chromosome"/>
</dbReference>
<dbReference type="GO" id="GO:0022627">
    <property type="term" value="C:cytosolic small ribosomal subunit"/>
    <property type="evidence" value="ECO:0007669"/>
    <property type="project" value="TreeGrafter"/>
</dbReference>
<dbReference type="GO" id="GO:0003723">
    <property type="term" value="F:RNA binding"/>
    <property type="evidence" value="ECO:0007669"/>
    <property type="project" value="TreeGrafter"/>
</dbReference>
<dbReference type="GO" id="GO:0003735">
    <property type="term" value="F:structural constituent of ribosome"/>
    <property type="evidence" value="ECO:0007669"/>
    <property type="project" value="InterPro"/>
</dbReference>
<dbReference type="GO" id="GO:0006412">
    <property type="term" value="P:translation"/>
    <property type="evidence" value="ECO:0007669"/>
    <property type="project" value="UniProtKB-UniRule"/>
</dbReference>
<dbReference type="FunFam" id="3.30.230.10:FF:000001">
    <property type="entry name" value="30S ribosomal protein S9"/>
    <property type="match status" value="1"/>
</dbReference>
<dbReference type="Gene3D" id="3.30.230.10">
    <property type="match status" value="1"/>
</dbReference>
<dbReference type="HAMAP" id="MF_00532_B">
    <property type="entry name" value="Ribosomal_uS9_B"/>
    <property type="match status" value="1"/>
</dbReference>
<dbReference type="InterPro" id="IPR020568">
    <property type="entry name" value="Ribosomal_Su5_D2-typ_SF"/>
</dbReference>
<dbReference type="InterPro" id="IPR000754">
    <property type="entry name" value="Ribosomal_uS9"/>
</dbReference>
<dbReference type="InterPro" id="IPR023035">
    <property type="entry name" value="Ribosomal_uS9_bac/plastid"/>
</dbReference>
<dbReference type="InterPro" id="IPR020574">
    <property type="entry name" value="Ribosomal_uS9_CS"/>
</dbReference>
<dbReference type="InterPro" id="IPR014721">
    <property type="entry name" value="Ribsml_uS5_D2-typ_fold_subgr"/>
</dbReference>
<dbReference type="NCBIfam" id="NF001099">
    <property type="entry name" value="PRK00132.1"/>
    <property type="match status" value="1"/>
</dbReference>
<dbReference type="PANTHER" id="PTHR21569">
    <property type="entry name" value="RIBOSOMAL PROTEIN S9"/>
    <property type="match status" value="1"/>
</dbReference>
<dbReference type="PANTHER" id="PTHR21569:SF1">
    <property type="entry name" value="SMALL RIBOSOMAL SUBUNIT PROTEIN US9M"/>
    <property type="match status" value="1"/>
</dbReference>
<dbReference type="Pfam" id="PF00380">
    <property type="entry name" value="Ribosomal_S9"/>
    <property type="match status" value="1"/>
</dbReference>
<dbReference type="SUPFAM" id="SSF54211">
    <property type="entry name" value="Ribosomal protein S5 domain 2-like"/>
    <property type="match status" value="1"/>
</dbReference>
<dbReference type="PROSITE" id="PS00360">
    <property type="entry name" value="RIBOSOMAL_S9"/>
    <property type="match status" value="1"/>
</dbReference>
<accession>B9DYE4</accession>
<name>RS9_CLOK1</name>
<evidence type="ECO:0000255" key="1">
    <source>
        <dbReference type="HAMAP-Rule" id="MF_00532"/>
    </source>
</evidence>
<evidence type="ECO:0000256" key="2">
    <source>
        <dbReference type="SAM" id="MobiDB-lite"/>
    </source>
</evidence>
<evidence type="ECO:0000305" key="3"/>
<protein>
    <recommendedName>
        <fullName evidence="1">Small ribosomal subunit protein uS9</fullName>
    </recommendedName>
    <alternativeName>
        <fullName evidence="3">30S ribosomal protein S9</fullName>
    </alternativeName>
</protein>
<comment type="similarity">
    <text evidence="1">Belongs to the universal ribosomal protein uS9 family.</text>
</comment>
<feature type="chain" id="PRO_1000146445" description="Small ribosomal subunit protein uS9">
    <location>
        <begin position="1"/>
        <end position="130"/>
    </location>
</feature>
<feature type="region of interest" description="Disordered" evidence="2">
    <location>
        <begin position="109"/>
        <end position="130"/>
    </location>
</feature>
<feature type="compositionally biased region" description="Basic residues" evidence="2">
    <location>
        <begin position="111"/>
        <end position="130"/>
    </location>
</feature>
<keyword id="KW-0687">Ribonucleoprotein</keyword>
<keyword id="KW-0689">Ribosomal protein</keyword>
<gene>
    <name evidence="1" type="primary">rpsI</name>
    <name type="ordered locus">CKR_0218</name>
</gene>